<accession>B8J249</accession>
<sequence length="250" mass="26683">MIIFPAVDIQNGKAVRLKQGRAHESTVFAESPVDAARAWEEAGARWLHVVDLDGAFDGAAQSRRIVRDICAALAIPVQLGGGIRDMHTAEAYLEAGVSRLIIGTLALEQPTLFADMCRAFPGRVGVSLDAEGGRLKSRGWVEDTGMTVDTALPRLLDDGAAFVIYTDIERDGMQCGVNVAALEHLARLSTVPVIAAGGVATLEDIQKLYPLTLETSLMGAVSGRALYEGTLDLKEANAWIDARKNTPESA</sequence>
<comment type="catalytic activity">
    <reaction evidence="1">
        <text>1-(5-phospho-beta-D-ribosyl)-5-[(5-phospho-beta-D-ribosylamino)methylideneamino]imidazole-4-carboxamide = 5-[(5-phospho-1-deoxy-D-ribulos-1-ylimino)methylamino]-1-(5-phospho-beta-D-ribosyl)imidazole-4-carboxamide</text>
        <dbReference type="Rhea" id="RHEA:15469"/>
        <dbReference type="ChEBI" id="CHEBI:58435"/>
        <dbReference type="ChEBI" id="CHEBI:58525"/>
        <dbReference type="EC" id="5.3.1.16"/>
    </reaction>
</comment>
<comment type="pathway">
    <text evidence="1">Amino-acid biosynthesis; L-histidine biosynthesis; L-histidine from 5-phospho-alpha-D-ribose 1-diphosphate: step 4/9.</text>
</comment>
<comment type="subcellular location">
    <subcellularLocation>
        <location evidence="1">Cytoplasm</location>
    </subcellularLocation>
</comment>
<comment type="similarity">
    <text evidence="1">Belongs to the HisA/HisF family.</text>
</comment>
<keyword id="KW-0028">Amino-acid biosynthesis</keyword>
<keyword id="KW-0963">Cytoplasm</keyword>
<keyword id="KW-0368">Histidine biosynthesis</keyword>
<keyword id="KW-0413">Isomerase</keyword>
<gene>
    <name evidence="1" type="primary">hisA</name>
    <name type="ordered locus">Ddes_1811</name>
</gene>
<proteinExistence type="inferred from homology"/>
<dbReference type="EC" id="5.3.1.16" evidence="1"/>
<dbReference type="EMBL" id="CP001358">
    <property type="protein sequence ID" value="ACL49708.1"/>
    <property type="molecule type" value="Genomic_DNA"/>
</dbReference>
<dbReference type="SMR" id="B8J249"/>
<dbReference type="STRING" id="525146.Ddes_1811"/>
<dbReference type="KEGG" id="dds:Ddes_1811"/>
<dbReference type="eggNOG" id="COG0106">
    <property type="taxonomic scope" value="Bacteria"/>
</dbReference>
<dbReference type="HOGENOM" id="CLU_048577_1_1_7"/>
<dbReference type="UniPathway" id="UPA00031">
    <property type="reaction ID" value="UER00009"/>
</dbReference>
<dbReference type="GO" id="GO:0005737">
    <property type="term" value="C:cytoplasm"/>
    <property type="evidence" value="ECO:0007669"/>
    <property type="project" value="UniProtKB-SubCell"/>
</dbReference>
<dbReference type="GO" id="GO:0003949">
    <property type="term" value="F:1-(5-phosphoribosyl)-5-[(5-phosphoribosylamino)methylideneamino]imidazole-4-carboxamide isomerase activity"/>
    <property type="evidence" value="ECO:0007669"/>
    <property type="project" value="UniProtKB-UniRule"/>
</dbReference>
<dbReference type="GO" id="GO:0000105">
    <property type="term" value="P:L-histidine biosynthetic process"/>
    <property type="evidence" value="ECO:0007669"/>
    <property type="project" value="UniProtKB-UniRule"/>
</dbReference>
<dbReference type="GO" id="GO:0000162">
    <property type="term" value="P:L-tryptophan biosynthetic process"/>
    <property type="evidence" value="ECO:0007669"/>
    <property type="project" value="TreeGrafter"/>
</dbReference>
<dbReference type="CDD" id="cd04732">
    <property type="entry name" value="HisA"/>
    <property type="match status" value="1"/>
</dbReference>
<dbReference type="FunFam" id="3.20.20.70:FF:000009">
    <property type="entry name" value="1-(5-phosphoribosyl)-5-[(5-phosphoribosylamino)methylideneamino] imidazole-4-carboxamide isomerase"/>
    <property type="match status" value="1"/>
</dbReference>
<dbReference type="Gene3D" id="3.20.20.70">
    <property type="entry name" value="Aldolase class I"/>
    <property type="match status" value="1"/>
</dbReference>
<dbReference type="HAMAP" id="MF_01014">
    <property type="entry name" value="HisA"/>
    <property type="match status" value="1"/>
</dbReference>
<dbReference type="InterPro" id="IPR013785">
    <property type="entry name" value="Aldolase_TIM"/>
</dbReference>
<dbReference type="InterPro" id="IPR006062">
    <property type="entry name" value="His_biosynth"/>
</dbReference>
<dbReference type="InterPro" id="IPR006063">
    <property type="entry name" value="HisA_bact_arch"/>
</dbReference>
<dbReference type="InterPro" id="IPR044524">
    <property type="entry name" value="Isoase_HisA-like"/>
</dbReference>
<dbReference type="InterPro" id="IPR023016">
    <property type="entry name" value="Isoase_HisA-like_bact"/>
</dbReference>
<dbReference type="InterPro" id="IPR011060">
    <property type="entry name" value="RibuloseP-bd_barrel"/>
</dbReference>
<dbReference type="NCBIfam" id="TIGR00007">
    <property type="entry name" value="1-(5-phosphoribosyl)-5-[(5-phosphoribosylamino)methylideneamino]imidazole-4-carboxamide isomerase"/>
    <property type="match status" value="1"/>
</dbReference>
<dbReference type="PANTHER" id="PTHR43090">
    <property type="entry name" value="1-(5-PHOSPHORIBOSYL)-5-[(5-PHOSPHORIBOSYLAMINO)METHYLIDENEAMINO] IMIDAZOLE-4-CARBOXAMIDE ISOMERASE"/>
    <property type="match status" value="1"/>
</dbReference>
<dbReference type="PANTHER" id="PTHR43090:SF2">
    <property type="entry name" value="1-(5-PHOSPHORIBOSYL)-5-[(5-PHOSPHORIBOSYLAMINO)METHYLIDENEAMINO] IMIDAZOLE-4-CARBOXAMIDE ISOMERASE"/>
    <property type="match status" value="1"/>
</dbReference>
<dbReference type="Pfam" id="PF00977">
    <property type="entry name" value="His_biosynth"/>
    <property type="match status" value="1"/>
</dbReference>
<dbReference type="SUPFAM" id="SSF51366">
    <property type="entry name" value="Ribulose-phoshate binding barrel"/>
    <property type="match status" value="1"/>
</dbReference>
<name>HIS4_DESDA</name>
<feature type="chain" id="PRO_1000148967" description="1-(5-phosphoribosyl)-5-[(5-phosphoribosylamino)methylideneamino] imidazole-4-carboxamide isomerase">
    <location>
        <begin position="1"/>
        <end position="250"/>
    </location>
</feature>
<feature type="active site" description="Proton acceptor" evidence="1">
    <location>
        <position position="8"/>
    </location>
</feature>
<feature type="active site" description="Proton donor" evidence="1">
    <location>
        <position position="129"/>
    </location>
</feature>
<evidence type="ECO:0000255" key="1">
    <source>
        <dbReference type="HAMAP-Rule" id="MF_01014"/>
    </source>
</evidence>
<reference key="1">
    <citation type="submission" date="2009-01" db="EMBL/GenBank/DDBJ databases">
        <title>Complete sequence of Desulfovibrio desulfuricans subsp. desulfuricans str. ATCC 27774.</title>
        <authorList>
            <consortium name="US DOE Joint Genome Institute"/>
            <person name="Lucas S."/>
            <person name="Copeland A."/>
            <person name="Lapidus A."/>
            <person name="Glavina del Rio T."/>
            <person name="Tice H."/>
            <person name="Bruce D."/>
            <person name="Goodwin L."/>
            <person name="Pitluck S."/>
            <person name="Sims D."/>
            <person name="Lu M."/>
            <person name="Kiss H."/>
            <person name="Meineke L."/>
            <person name="Brettin T."/>
            <person name="Detter J.C."/>
            <person name="Han C."/>
            <person name="Larimer F."/>
            <person name="Land M."/>
            <person name="Hauser L."/>
            <person name="Kyrpides N."/>
            <person name="Ovchinnikova G."/>
            <person name="Hazen T.C."/>
        </authorList>
    </citation>
    <scope>NUCLEOTIDE SEQUENCE [LARGE SCALE GENOMIC DNA]</scope>
    <source>
        <strain>ATCC 27774 / DSM 6949 / MB</strain>
    </source>
</reference>
<protein>
    <recommendedName>
        <fullName evidence="1">1-(5-phosphoribosyl)-5-[(5-phosphoribosylamino)methylideneamino] imidazole-4-carboxamide isomerase</fullName>
        <ecNumber evidence="1">5.3.1.16</ecNumber>
    </recommendedName>
    <alternativeName>
        <fullName evidence="1">Phosphoribosylformimino-5-aminoimidazole carboxamide ribotide isomerase</fullName>
    </alternativeName>
</protein>
<organism>
    <name type="scientific">Desulfovibrio desulfuricans (strain ATCC 27774 / DSM 6949 / MB)</name>
    <dbReference type="NCBI Taxonomy" id="525146"/>
    <lineage>
        <taxon>Bacteria</taxon>
        <taxon>Pseudomonadati</taxon>
        <taxon>Thermodesulfobacteriota</taxon>
        <taxon>Desulfovibrionia</taxon>
        <taxon>Desulfovibrionales</taxon>
        <taxon>Desulfovibrionaceae</taxon>
        <taxon>Desulfovibrio</taxon>
    </lineage>
</organism>